<reference key="1">
    <citation type="journal article" date="2009" name="PLoS Pathog.">
        <title>Genomic evidence for the evolution of Streptococcus equi: host restriction, increased virulence, and genetic exchange with human pathogens.</title>
        <authorList>
            <person name="Holden M.T.G."/>
            <person name="Heather Z."/>
            <person name="Paillot R."/>
            <person name="Steward K.F."/>
            <person name="Webb K."/>
            <person name="Ainslie F."/>
            <person name="Jourdan T."/>
            <person name="Bason N.C."/>
            <person name="Holroyd N.E."/>
            <person name="Mungall K."/>
            <person name="Quail M.A."/>
            <person name="Sanders M."/>
            <person name="Simmonds M."/>
            <person name="Willey D."/>
            <person name="Brooks K."/>
            <person name="Aanensen D.M."/>
            <person name="Spratt B.G."/>
            <person name="Jolley K.A."/>
            <person name="Maiden M.C.J."/>
            <person name="Kehoe M."/>
            <person name="Chanter N."/>
            <person name="Bentley S.D."/>
            <person name="Robinson C."/>
            <person name="Maskell D.J."/>
            <person name="Parkhill J."/>
            <person name="Waller A.S."/>
        </authorList>
    </citation>
    <scope>NUCLEOTIDE SEQUENCE [LARGE SCALE GENOMIC DNA]</scope>
    <source>
        <strain>4047</strain>
    </source>
</reference>
<sequence>MARVKGGVVSRKRRKRILKLAKGYYGAKHILFRTAKEQVMNSYYYAYRDRRQKKRDFRKLWITRINAAARMNGLSYSQLMHGLKLAEIEVNRKMLADLAVNDAAAFTALADAAKAKLGK</sequence>
<proteinExistence type="inferred from homology"/>
<dbReference type="EMBL" id="FM204883">
    <property type="protein sequence ID" value="CAW93548.1"/>
    <property type="molecule type" value="Genomic_DNA"/>
</dbReference>
<dbReference type="RefSeq" id="WP_000124834.1">
    <property type="nucleotide sequence ID" value="NC_012471.1"/>
</dbReference>
<dbReference type="SMR" id="C0M8T1"/>
<dbReference type="GeneID" id="93963366"/>
<dbReference type="KEGG" id="seu:SEQ_0983"/>
<dbReference type="HOGENOM" id="CLU_123265_0_1_9"/>
<dbReference type="OrthoDB" id="9808966at2"/>
<dbReference type="Proteomes" id="UP000001365">
    <property type="component" value="Chromosome"/>
</dbReference>
<dbReference type="GO" id="GO:1990904">
    <property type="term" value="C:ribonucleoprotein complex"/>
    <property type="evidence" value="ECO:0007669"/>
    <property type="project" value="UniProtKB-KW"/>
</dbReference>
<dbReference type="GO" id="GO:0005840">
    <property type="term" value="C:ribosome"/>
    <property type="evidence" value="ECO:0007669"/>
    <property type="project" value="UniProtKB-KW"/>
</dbReference>
<dbReference type="GO" id="GO:0019843">
    <property type="term" value="F:rRNA binding"/>
    <property type="evidence" value="ECO:0007669"/>
    <property type="project" value="UniProtKB-UniRule"/>
</dbReference>
<dbReference type="GO" id="GO:0003735">
    <property type="term" value="F:structural constituent of ribosome"/>
    <property type="evidence" value="ECO:0007669"/>
    <property type="project" value="InterPro"/>
</dbReference>
<dbReference type="GO" id="GO:0000027">
    <property type="term" value="P:ribosomal large subunit assembly"/>
    <property type="evidence" value="ECO:0007669"/>
    <property type="project" value="UniProtKB-UniRule"/>
</dbReference>
<dbReference type="GO" id="GO:0006412">
    <property type="term" value="P:translation"/>
    <property type="evidence" value="ECO:0007669"/>
    <property type="project" value="InterPro"/>
</dbReference>
<dbReference type="CDD" id="cd07026">
    <property type="entry name" value="Ribosomal_L20"/>
    <property type="match status" value="1"/>
</dbReference>
<dbReference type="FunFam" id="1.10.1900.20:FF:000001">
    <property type="entry name" value="50S ribosomal protein L20"/>
    <property type="match status" value="1"/>
</dbReference>
<dbReference type="Gene3D" id="6.10.160.10">
    <property type="match status" value="1"/>
</dbReference>
<dbReference type="Gene3D" id="1.10.1900.20">
    <property type="entry name" value="Ribosomal protein L20"/>
    <property type="match status" value="1"/>
</dbReference>
<dbReference type="HAMAP" id="MF_00382">
    <property type="entry name" value="Ribosomal_bL20"/>
    <property type="match status" value="1"/>
</dbReference>
<dbReference type="InterPro" id="IPR005813">
    <property type="entry name" value="Ribosomal_bL20"/>
</dbReference>
<dbReference type="InterPro" id="IPR049946">
    <property type="entry name" value="RIBOSOMAL_L20_CS"/>
</dbReference>
<dbReference type="InterPro" id="IPR035566">
    <property type="entry name" value="Ribosomal_protein_bL20_C"/>
</dbReference>
<dbReference type="NCBIfam" id="TIGR01032">
    <property type="entry name" value="rplT_bact"/>
    <property type="match status" value="1"/>
</dbReference>
<dbReference type="PANTHER" id="PTHR10986">
    <property type="entry name" value="39S RIBOSOMAL PROTEIN L20"/>
    <property type="match status" value="1"/>
</dbReference>
<dbReference type="Pfam" id="PF00453">
    <property type="entry name" value="Ribosomal_L20"/>
    <property type="match status" value="1"/>
</dbReference>
<dbReference type="PRINTS" id="PR00062">
    <property type="entry name" value="RIBOSOMALL20"/>
</dbReference>
<dbReference type="SUPFAM" id="SSF74731">
    <property type="entry name" value="Ribosomal protein L20"/>
    <property type="match status" value="1"/>
</dbReference>
<dbReference type="PROSITE" id="PS00937">
    <property type="entry name" value="RIBOSOMAL_L20"/>
    <property type="match status" value="1"/>
</dbReference>
<comment type="function">
    <text evidence="1">Binds directly to 23S ribosomal RNA and is necessary for the in vitro assembly process of the 50S ribosomal subunit. It is not involved in the protein synthesizing functions of that subunit.</text>
</comment>
<comment type="similarity">
    <text evidence="1">Belongs to the bacterial ribosomal protein bL20 family.</text>
</comment>
<protein>
    <recommendedName>
        <fullName evidence="1">Large ribosomal subunit protein bL20</fullName>
    </recommendedName>
    <alternativeName>
        <fullName evidence="2">50S ribosomal protein L20</fullName>
    </alternativeName>
</protein>
<accession>C0M8T1</accession>
<gene>
    <name evidence="1" type="primary">rplT</name>
    <name type="ordered locus">SEQ_0983</name>
</gene>
<keyword id="KW-0687">Ribonucleoprotein</keyword>
<keyword id="KW-0689">Ribosomal protein</keyword>
<keyword id="KW-0694">RNA-binding</keyword>
<keyword id="KW-0699">rRNA-binding</keyword>
<feature type="chain" id="PRO_1000193978" description="Large ribosomal subunit protein bL20">
    <location>
        <begin position="1"/>
        <end position="119"/>
    </location>
</feature>
<evidence type="ECO:0000255" key="1">
    <source>
        <dbReference type="HAMAP-Rule" id="MF_00382"/>
    </source>
</evidence>
<evidence type="ECO:0000305" key="2"/>
<name>RL20_STRE4</name>
<organism>
    <name type="scientific">Streptococcus equi subsp. equi (strain 4047)</name>
    <dbReference type="NCBI Taxonomy" id="553482"/>
    <lineage>
        <taxon>Bacteria</taxon>
        <taxon>Bacillati</taxon>
        <taxon>Bacillota</taxon>
        <taxon>Bacilli</taxon>
        <taxon>Lactobacillales</taxon>
        <taxon>Streptococcaceae</taxon>
        <taxon>Streptococcus</taxon>
    </lineage>
</organism>